<organism>
    <name type="scientific">Geobacillus sp. (strain WCH70)</name>
    <dbReference type="NCBI Taxonomy" id="471223"/>
    <lineage>
        <taxon>Bacteria</taxon>
        <taxon>Bacillati</taxon>
        <taxon>Bacillota</taxon>
        <taxon>Bacilli</taxon>
        <taxon>Bacillales</taxon>
        <taxon>Anoxybacillaceae</taxon>
        <taxon>Geobacillus</taxon>
    </lineage>
</organism>
<gene>
    <name evidence="1" type="primary">adk</name>
    <name type="ordered locus">GWCH70_0132</name>
</gene>
<feature type="chain" id="PRO_1000204415" description="Adenylate kinase">
    <location>
        <begin position="1"/>
        <end position="216"/>
    </location>
</feature>
<feature type="region of interest" description="NMP" evidence="1">
    <location>
        <begin position="30"/>
        <end position="59"/>
    </location>
</feature>
<feature type="region of interest" description="LID" evidence="1">
    <location>
        <begin position="126"/>
        <end position="163"/>
    </location>
</feature>
<feature type="binding site" evidence="1">
    <location>
        <begin position="10"/>
        <end position="15"/>
    </location>
    <ligand>
        <name>ATP</name>
        <dbReference type="ChEBI" id="CHEBI:30616"/>
    </ligand>
</feature>
<feature type="binding site" evidence="1">
    <location>
        <position position="31"/>
    </location>
    <ligand>
        <name>AMP</name>
        <dbReference type="ChEBI" id="CHEBI:456215"/>
    </ligand>
</feature>
<feature type="binding site" evidence="1">
    <location>
        <position position="36"/>
    </location>
    <ligand>
        <name>AMP</name>
        <dbReference type="ChEBI" id="CHEBI:456215"/>
    </ligand>
</feature>
<feature type="binding site" evidence="1">
    <location>
        <begin position="57"/>
        <end position="59"/>
    </location>
    <ligand>
        <name>AMP</name>
        <dbReference type="ChEBI" id="CHEBI:456215"/>
    </ligand>
</feature>
<feature type="binding site" evidence="1">
    <location>
        <begin position="85"/>
        <end position="88"/>
    </location>
    <ligand>
        <name>AMP</name>
        <dbReference type="ChEBI" id="CHEBI:456215"/>
    </ligand>
</feature>
<feature type="binding site" evidence="1">
    <location>
        <position position="92"/>
    </location>
    <ligand>
        <name>AMP</name>
        <dbReference type="ChEBI" id="CHEBI:456215"/>
    </ligand>
</feature>
<feature type="binding site" evidence="1">
    <location>
        <position position="127"/>
    </location>
    <ligand>
        <name>ATP</name>
        <dbReference type="ChEBI" id="CHEBI:30616"/>
    </ligand>
</feature>
<feature type="binding site" evidence="1">
    <location>
        <position position="130"/>
    </location>
    <ligand>
        <name>Zn(2+)</name>
        <dbReference type="ChEBI" id="CHEBI:29105"/>
        <note>structural</note>
    </ligand>
</feature>
<feature type="binding site" evidence="1">
    <location>
        <position position="133"/>
    </location>
    <ligand>
        <name>Zn(2+)</name>
        <dbReference type="ChEBI" id="CHEBI:29105"/>
        <note>structural</note>
    </ligand>
</feature>
<feature type="binding site" evidence="1">
    <location>
        <begin position="136"/>
        <end position="137"/>
    </location>
    <ligand>
        <name>ATP</name>
        <dbReference type="ChEBI" id="CHEBI:30616"/>
    </ligand>
</feature>
<feature type="binding site" evidence="1">
    <location>
        <position position="150"/>
    </location>
    <ligand>
        <name>Zn(2+)</name>
        <dbReference type="ChEBI" id="CHEBI:29105"/>
        <note>structural</note>
    </ligand>
</feature>
<feature type="binding site" evidence="1">
    <location>
        <position position="153"/>
    </location>
    <ligand>
        <name>Zn(2+)</name>
        <dbReference type="ChEBI" id="CHEBI:29105"/>
        <note>structural</note>
    </ligand>
</feature>
<feature type="binding site" evidence="1">
    <location>
        <position position="160"/>
    </location>
    <ligand>
        <name>AMP</name>
        <dbReference type="ChEBI" id="CHEBI:456215"/>
    </ligand>
</feature>
<feature type="binding site" evidence="1">
    <location>
        <position position="171"/>
    </location>
    <ligand>
        <name>AMP</name>
        <dbReference type="ChEBI" id="CHEBI:456215"/>
    </ligand>
</feature>
<feature type="binding site" evidence="1">
    <location>
        <position position="199"/>
    </location>
    <ligand>
        <name>ATP</name>
        <dbReference type="ChEBI" id="CHEBI:30616"/>
    </ligand>
</feature>
<name>KAD_GEOSW</name>
<sequence length="216" mass="24107">MNLVLMGLPGAGKGTQAEKIVETYGIPHISTGDMFRAAIKEGTPLGLQAKEYMDRGDLVPDEVTIGIVRERLSKDDCQKGFLLDGFPRTVAQAEALENILAELNRSIDYVIHIQVDKDILMERLTGRRICKNCGATYHLVFNPPAKSGVCDKCGGELYQRADDNEETVANRLEVNIKQTQPLLEFYEKKGYLRHINGQQDIEKVFADIRELLGGLQ</sequence>
<dbReference type="EC" id="2.7.4.3" evidence="1"/>
<dbReference type="EMBL" id="CP001638">
    <property type="protein sequence ID" value="ACS23072.1"/>
    <property type="molecule type" value="Genomic_DNA"/>
</dbReference>
<dbReference type="SMR" id="C5D3T8"/>
<dbReference type="STRING" id="471223.GWCH70_0132"/>
<dbReference type="KEGG" id="gwc:GWCH70_0132"/>
<dbReference type="eggNOG" id="COG0563">
    <property type="taxonomic scope" value="Bacteria"/>
</dbReference>
<dbReference type="HOGENOM" id="CLU_032354_1_2_9"/>
<dbReference type="OrthoDB" id="9805030at2"/>
<dbReference type="UniPathway" id="UPA00588">
    <property type="reaction ID" value="UER00649"/>
</dbReference>
<dbReference type="GO" id="GO:0005737">
    <property type="term" value="C:cytoplasm"/>
    <property type="evidence" value="ECO:0007669"/>
    <property type="project" value="UniProtKB-SubCell"/>
</dbReference>
<dbReference type="GO" id="GO:0004017">
    <property type="term" value="F:adenylate kinase activity"/>
    <property type="evidence" value="ECO:0007669"/>
    <property type="project" value="UniProtKB-UniRule"/>
</dbReference>
<dbReference type="GO" id="GO:0005524">
    <property type="term" value="F:ATP binding"/>
    <property type="evidence" value="ECO:0007669"/>
    <property type="project" value="UniProtKB-UniRule"/>
</dbReference>
<dbReference type="GO" id="GO:0008270">
    <property type="term" value="F:zinc ion binding"/>
    <property type="evidence" value="ECO:0007669"/>
    <property type="project" value="UniProtKB-UniRule"/>
</dbReference>
<dbReference type="GO" id="GO:0044209">
    <property type="term" value="P:AMP salvage"/>
    <property type="evidence" value="ECO:0007669"/>
    <property type="project" value="UniProtKB-UniRule"/>
</dbReference>
<dbReference type="CDD" id="cd01428">
    <property type="entry name" value="ADK"/>
    <property type="match status" value="1"/>
</dbReference>
<dbReference type="FunFam" id="3.40.50.300:FF:000106">
    <property type="entry name" value="Adenylate kinase mitochondrial"/>
    <property type="match status" value="1"/>
</dbReference>
<dbReference type="Gene3D" id="3.40.50.300">
    <property type="entry name" value="P-loop containing nucleotide triphosphate hydrolases"/>
    <property type="match status" value="1"/>
</dbReference>
<dbReference type="HAMAP" id="MF_00235">
    <property type="entry name" value="Adenylate_kinase_Adk"/>
    <property type="match status" value="1"/>
</dbReference>
<dbReference type="InterPro" id="IPR006259">
    <property type="entry name" value="Adenyl_kin_sub"/>
</dbReference>
<dbReference type="InterPro" id="IPR000850">
    <property type="entry name" value="Adenylat/UMP-CMP_kin"/>
</dbReference>
<dbReference type="InterPro" id="IPR033690">
    <property type="entry name" value="Adenylat_kinase_CS"/>
</dbReference>
<dbReference type="InterPro" id="IPR007862">
    <property type="entry name" value="Adenylate_kinase_lid-dom"/>
</dbReference>
<dbReference type="InterPro" id="IPR027417">
    <property type="entry name" value="P-loop_NTPase"/>
</dbReference>
<dbReference type="NCBIfam" id="TIGR01351">
    <property type="entry name" value="adk"/>
    <property type="match status" value="1"/>
</dbReference>
<dbReference type="NCBIfam" id="NF001380">
    <property type="entry name" value="PRK00279.1-2"/>
    <property type="match status" value="1"/>
</dbReference>
<dbReference type="NCBIfam" id="NF001381">
    <property type="entry name" value="PRK00279.1-3"/>
    <property type="match status" value="1"/>
</dbReference>
<dbReference type="NCBIfam" id="NF011100">
    <property type="entry name" value="PRK14527.1"/>
    <property type="match status" value="1"/>
</dbReference>
<dbReference type="PANTHER" id="PTHR23359">
    <property type="entry name" value="NUCLEOTIDE KINASE"/>
    <property type="match status" value="1"/>
</dbReference>
<dbReference type="Pfam" id="PF00406">
    <property type="entry name" value="ADK"/>
    <property type="match status" value="1"/>
</dbReference>
<dbReference type="Pfam" id="PF05191">
    <property type="entry name" value="ADK_lid"/>
    <property type="match status" value="1"/>
</dbReference>
<dbReference type="PRINTS" id="PR00094">
    <property type="entry name" value="ADENYLTKNASE"/>
</dbReference>
<dbReference type="SUPFAM" id="SSF52540">
    <property type="entry name" value="P-loop containing nucleoside triphosphate hydrolases"/>
    <property type="match status" value="1"/>
</dbReference>
<dbReference type="PROSITE" id="PS00113">
    <property type="entry name" value="ADENYLATE_KINASE"/>
    <property type="match status" value="1"/>
</dbReference>
<evidence type="ECO:0000255" key="1">
    <source>
        <dbReference type="HAMAP-Rule" id="MF_00235"/>
    </source>
</evidence>
<reference key="1">
    <citation type="submission" date="2009-06" db="EMBL/GenBank/DDBJ databases">
        <title>Complete sequence of chromosome of Geopacillus sp. WCH70.</title>
        <authorList>
            <consortium name="US DOE Joint Genome Institute"/>
            <person name="Lucas S."/>
            <person name="Copeland A."/>
            <person name="Lapidus A."/>
            <person name="Glavina del Rio T."/>
            <person name="Dalin E."/>
            <person name="Tice H."/>
            <person name="Bruce D."/>
            <person name="Goodwin L."/>
            <person name="Pitluck S."/>
            <person name="Chertkov O."/>
            <person name="Brettin T."/>
            <person name="Detter J.C."/>
            <person name="Han C."/>
            <person name="Larimer F."/>
            <person name="Land M."/>
            <person name="Hauser L."/>
            <person name="Kyrpides N."/>
            <person name="Mikhailova N."/>
            <person name="Brumm P."/>
            <person name="Mead D.A."/>
            <person name="Richardson P."/>
        </authorList>
    </citation>
    <scope>NUCLEOTIDE SEQUENCE [LARGE SCALE GENOMIC DNA]</scope>
    <source>
        <strain>WCH70</strain>
    </source>
</reference>
<proteinExistence type="inferred from homology"/>
<comment type="function">
    <text evidence="1">Catalyzes the reversible transfer of the terminal phosphate group between ATP and AMP. Plays an important role in cellular energy homeostasis and in adenine nucleotide metabolism.</text>
</comment>
<comment type="catalytic activity">
    <reaction evidence="1">
        <text>AMP + ATP = 2 ADP</text>
        <dbReference type="Rhea" id="RHEA:12973"/>
        <dbReference type="ChEBI" id="CHEBI:30616"/>
        <dbReference type="ChEBI" id="CHEBI:456215"/>
        <dbReference type="ChEBI" id="CHEBI:456216"/>
        <dbReference type="EC" id="2.7.4.3"/>
    </reaction>
</comment>
<comment type="pathway">
    <text evidence="1">Purine metabolism; AMP biosynthesis via salvage pathway; AMP from ADP: step 1/1.</text>
</comment>
<comment type="subunit">
    <text evidence="1">Monomer.</text>
</comment>
<comment type="subcellular location">
    <subcellularLocation>
        <location evidence="1">Cytoplasm</location>
    </subcellularLocation>
</comment>
<comment type="domain">
    <text evidence="1">Consists of three domains, a large central CORE domain and two small peripheral domains, NMPbind and LID, which undergo movements during catalysis. The LID domain closes over the site of phosphoryl transfer upon ATP binding. Assembling and dissambling the active center during each catalytic cycle provides an effective means to prevent ATP hydrolysis. Some bacteria have evolved a zinc-coordinating structure that stabilizes the LID domain.</text>
</comment>
<comment type="similarity">
    <text evidence="1">Belongs to the adenylate kinase family.</text>
</comment>
<protein>
    <recommendedName>
        <fullName evidence="1">Adenylate kinase</fullName>
        <shortName evidence="1">AK</shortName>
        <ecNumber evidence="1">2.7.4.3</ecNumber>
    </recommendedName>
    <alternativeName>
        <fullName evidence="1">ATP-AMP transphosphorylase</fullName>
    </alternativeName>
    <alternativeName>
        <fullName evidence="1">ATP:AMP phosphotransferase</fullName>
    </alternativeName>
    <alternativeName>
        <fullName evidence="1">Adenylate monophosphate kinase</fullName>
    </alternativeName>
</protein>
<accession>C5D3T8</accession>
<keyword id="KW-0067">ATP-binding</keyword>
<keyword id="KW-0963">Cytoplasm</keyword>
<keyword id="KW-0418">Kinase</keyword>
<keyword id="KW-0479">Metal-binding</keyword>
<keyword id="KW-0545">Nucleotide biosynthesis</keyword>
<keyword id="KW-0547">Nucleotide-binding</keyword>
<keyword id="KW-0808">Transferase</keyword>
<keyword id="KW-0862">Zinc</keyword>